<evidence type="ECO:0000255" key="1">
    <source>
        <dbReference type="HAMAP-Rule" id="MF_00535"/>
    </source>
</evidence>
<organism>
    <name type="scientific">Pseudomonas aeruginosa (strain UCBPP-PA14)</name>
    <dbReference type="NCBI Taxonomy" id="208963"/>
    <lineage>
        <taxon>Bacteria</taxon>
        <taxon>Pseudomonadati</taxon>
        <taxon>Pseudomonadota</taxon>
        <taxon>Gammaproteobacteria</taxon>
        <taxon>Pseudomonadales</taxon>
        <taxon>Pseudomonadaceae</taxon>
        <taxon>Pseudomonas</taxon>
    </lineage>
</organism>
<name>CYNS_PSEAB</name>
<reference key="1">
    <citation type="journal article" date="2006" name="Genome Biol.">
        <title>Genomic analysis reveals that Pseudomonas aeruginosa virulence is combinatorial.</title>
        <authorList>
            <person name="Lee D.G."/>
            <person name="Urbach J.M."/>
            <person name="Wu G."/>
            <person name="Liberati N.T."/>
            <person name="Feinbaum R.L."/>
            <person name="Miyata S."/>
            <person name="Diggins L.T."/>
            <person name="He J."/>
            <person name="Saucier M."/>
            <person name="Deziel E."/>
            <person name="Friedman L."/>
            <person name="Li L."/>
            <person name="Grills G."/>
            <person name="Montgomery K."/>
            <person name="Kucherlapati R."/>
            <person name="Rahme L.G."/>
            <person name="Ausubel F.M."/>
        </authorList>
    </citation>
    <scope>NUCLEOTIDE SEQUENCE [LARGE SCALE GENOMIC DNA]</scope>
    <source>
        <strain>UCBPP-PA14</strain>
    </source>
</reference>
<proteinExistence type="inferred from homology"/>
<dbReference type="EC" id="4.2.1.104" evidence="1"/>
<dbReference type="EMBL" id="CP000438">
    <property type="protein sequence ID" value="ABJ15651.1"/>
    <property type="molecule type" value="Genomic_DNA"/>
</dbReference>
<dbReference type="RefSeq" id="WP_011666684.1">
    <property type="nucleotide sequence ID" value="NC_008463.1"/>
</dbReference>
<dbReference type="SMR" id="Q02LK0"/>
<dbReference type="KEGG" id="pau:PA14_37965"/>
<dbReference type="PseudoCAP" id="PA14_37965"/>
<dbReference type="HOGENOM" id="CLU_103452_1_1_6"/>
<dbReference type="BioCyc" id="PAER208963:G1G74-3193-MONOMER"/>
<dbReference type="Proteomes" id="UP000000653">
    <property type="component" value="Chromosome"/>
</dbReference>
<dbReference type="GO" id="GO:0008824">
    <property type="term" value="F:cyanate hydratase activity"/>
    <property type="evidence" value="ECO:0007669"/>
    <property type="project" value="UniProtKB-UniRule"/>
</dbReference>
<dbReference type="GO" id="GO:0003677">
    <property type="term" value="F:DNA binding"/>
    <property type="evidence" value="ECO:0007669"/>
    <property type="project" value="InterPro"/>
</dbReference>
<dbReference type="GO" id="GO:0009439">
    <property type="term" value="P:cyanate metabolic process"/>
    <property type="evidence" value="ECO:0007669"/>
    <property type="project" value="UniProtKB-UniRule"/>
</dbReference>
<dbReference type="CDD" id="cd00559">
    <property type="entry name" value="Cyanase_C"/>
    <property type="match status" value="1"/>
</dbReference>
<dbReference type="Gene3D" id="3.30.1160.10">
    <property type="entry name" value="Cyanate lyase, C-terminal domain"/>
    <property type="match status" value="1"/>
</dbReference>
<dbReference type="Gene3D" id="1.10.260.40">
    <property type="entry name" value="lambda repressor-like DNA-binding domains"/>
    <property type="match status" value="1"/>
</dbReference>
<dbReference type="HAMAP" id="MF_00535">
    <property type="entry name" value="Cyanate_hydrat"/>
    <property type="match status" value="1"/>
</dbReference>
<dbReference type="InterPro" id="IPR008076">
    <property type="entry name" value="Cyanase"/>
</dbReference>
<dbReference type="InterPro" id="IPR003712">
    <property type="entry name" value="Cyanate_lyase_C"/>
</dbReference>
<dbReference type="InterPro" id="IPR036581">
    <property type="entry name" value="Cyanate_lyase_C_sf"/>
</dbReference>
<dbReference type="InterPro" id="IPR048564">
    <property type="entry name" value="CYNS_N"/>
</dbReference>
<dbReference type="InterPro" id="IPR010982">
    <property type="entry name" value="Lambda_DNA-bd_dom_sf"/>
</dbReference>
<dbReference type="NCBIfam" id="TIGR00673">
    <property type="entry name" value="cynS"/>
    <property type="match status" value="1"/>
</dbReference>
<dbReference type="NCBIfam" id="NF002773">
    <property type="entry name" value="PRK02866.1"/>
    <property type="match status" value="1"/>
</dbReference>
<dbReference type="PANTHER" id="PTHR34186">
    <property type="entry name" value="CYANATE HYDRATASE"/>
    <property type="match status" value="1"/>
</dbReference>
<dbReference type="PANTHER" id="PTHR34186:SF2">
    <property type="entry name" value="CYANATE HYDRATASE"/>
    <property type="match status" value="1"/>
</dbReference>
<dbReference type="Pfam" id="PF02560">
    <property type="entry name" value="Cyanate_lyase"/>
    <property type="match status" value="1"/>
</dbReference>
<dbReference type="Pfam" id="PF21291">
    <property type="entry name" value="CYNS_N"/>
    <property type="match status" value="1"/>
</dbReference>
<dbReference type="PIRSF" id="PIRSF001263">
    <property type="entry name" value="Cyanate_hydratas"/>
    <property type="match status" value="1"/>
</dbReference>
<dbReference type="PRINTS" id="PR01693">
    <property type="entry name" value="CYANASE"/>
</dbReference>
<dbReference type="SMART" id="SM01116">
    <property type="entry name" value="Cyanate_lyase"/>
    <property type="match status" value="1"/>
</dbReference>
<dbReference type="SUPFAM" id="SSF55234">
    <property type="entry name" value="Cyanase C-terminal domain"/>
    <property type="match status" value="1"/>
</dbReference>
<dbReference type="SUPFAM" id="SSF47413">
    <property type="entry name" value="lambda repressor-like DNA-binding domains"/>
    <property type="match status" value="1"/>
</dbReference>
<feature type="chain" id="PRO_1000051483" description="Cyanate hydratase">
    <location>
        <begin position="1"/>
        <end position="156"/>
    </location>
</feature>
<feature type="active site" evidence="1">
    <location>
        <position position="96"/>
    </location>
</feature>
<feature type="active site" evidence="1">
    <location>
        <position position="99"/>
    </location>
</feature>
<feature type="active site" evidence="1">
    <location>
        <position position="122"/>
    </location>
</feature>
<keyword id="KW-0456">Lyase</keyword>
<gene>
    <name evidence="1" type="primary">cynS</name>
    <name type="ordered locus">PA14_37965</name>
</gene>
<protein>
    <recommendedName>
        <fullName evidence="1">Cyanate hydratase</fullName>
        <shortName evidence="1">Cyanase</shortName>
        <ecNumber evidence="1">4.2.1.104</ecNumber>
    </recommendedName>
    <alternativeName>
        <fullName evidence="1">Cyanate hydrolase</fullName>
    </alternativeName>
    <alternativeName>
        <fullName evidence="1">Cyanate lyase</fullName>
    </alternativeName>
</protein>
<comment type="function">
    <text evidence="1">Catalyzes the reaction of cyanate with bicarbonate to produce ammonia and carbon dioxide.</text>
</comment>
<comment type="catalytic activity">
    <reaction evidence="1">
        <text>cyanate + hydrogencarbonate + 3 H(+) = NH4(+) + 2 CO2</text>
        <dbReference type="Rhea" id="RHEA:11120"/>
        <dbReference type="ChEBI" id="CHEBI:15378"/>
        <dbReference type="ChEBI" id="CHEBI:16526"/>
        <dbReference type="ChEBI" id="CHEBI:17544"/>
        <dbReference type="ChEBI" id="CHEBI:28938"/>
        <dbReference type="ChEBI" id="CHEBI:29195"/>
        <dbReference type="EC" id="4.2.1.104"/>
    </reaction>
</comment>
<comment type="similarity">
    <text evidence="1">Belongs to the cyanase family.</text>
</comment>
<accession>Q02LK0</accession>
<sequence>MQHSQVSPNARQQLAETVVLNKARLGLSWQDLADGTGIALTLVTAAMFGQHALPEAAARKVAAQLGMDDDAVLLLQSIPLRGSIPGGIPSDPTIYRFYEMLQVYGSTLKALVHEQFGDGIISAINFKLDIKKVEDPEGGSRAVITLDGKYLPTKPF</sequence>